<keyword id="KW-0119">Carbohydrate metabolism</keyword>
<keyword id="KW-0378">Hydrolase</keyword>
<keyword id="KW-0460">Magnesium</keyword>
<keyword id="KW-0479">Metal-binding</keyword>
<keyword id="KW-1185">Reference proteome</keyword>
<organism>
    <name type="scientific">Thiobacillus denitrificans (strain ATCC 25259 / T1)</name>
    <dbReference type="NCBI Taxonomy" id="292415"/>
    <lineage>
        <taxon>Bacteria</taxon>
        <taxon>Pseudomonadati</taxon>
        <taxon>Pseudomonadota</taxon>
        <taxon>Betaproteobacteria</taxon>
        <taxon>Nitrosomonadales</taxon>
        <taxon>Thiobacillaceae</taxon>
        <taxon>Thiobacillus</taxon>
    </lineage>
</organism>
<accession>Q3SGR5</accession>
<feature type="chain" id="PRO_0000238181" description="Phosphoglycolate phosphatase">
    <location>
        <begin position="1"/>
        <end position="227"/>
    </location>
</feature>
<feature type="active site" description="Nucleophile" evidence="1">
    <location>
        <position position="14"/>
    </location>
</feature>
<feature type="binding site" evidence="1">
    <location>
        <position position="14"/>
    </location>
    <ligand>
        <name>Mg(2+)</name>
        <dbReference type="ChEBI" id="CHEBI:18420"/>
    </ligand>
</feature>
<feature type="binding site" evidence="1">
    <location>
        <position position="16"/>
    </location>
    <ligand>
        <name>Mg(2+)</name>
        <dbReference type="ChEBI" id="CHEBI:18420"/>
    </ligand>
</feature>
<feature type="binding site" evidence="1">
    <location>
        <position position="177"/>
    </location>
    <ligand>
        <name>Mg(2+)</name>
        <dbReference type="ChEBI" id="CHEBI:18420"/>
    </ligand>
</feature>
<comment type="function">
    <text evidence="1">Specifically catalyzes the dephosphorylation of 2-phosphoglycolate. Is involved in the dissimilation of the intracellular 2-phosphoglycolate formed during the DNA repair of 3'-phosphoglycolate ends, a major class of DNA lesions induced by oxidative stress.</text>
</comment>
<comment type="catalytic activity">
    <reaction evidence="1">
        <text>2-phosphoglycolate + H2O = glycolate + phosphate</text>
        <dbReference type="Rhea" id="RHEA:14369"/>
        <dbReference type="ChEBI" id="CHEBI:15377"/>
        <dbReference type="ChEBI" id="CHEBI:29805"/>
        <dbReference type="ChEBI" id="CHEBI:43474"/>
        <dbReference type="ChEBI" id="CHEBI:58033"/>
        <dbReference type="EC" id="3.1.3.18"/>
    </reaction>
</comment>
<comment type="cofactor">
    <cofactor evidence="1">
        <name>Mg(2+)</name>
        <dbReference type="ChEBI" id="CHEBI:18420"/>
    </cofactor>
</comment>
<comment type="pathway">
    <text evidence="1">Organic acid metabolism; glycolate biosynthesis; glycolate from 2-phosphoglycolate: step 1/1.</text>
</comment>
<comment type="similarity">
    <text evidence="1">Belongs to the HAD-like hydrolase superfamily. CbbY/CbbZ/Gph/YieH family.</text>
</comment>
<proteinExistence type="inferred from homology"/>
<sequence>MKSFPLPIKAVVIDLDGTLLNTAPDLAHAAELMMAELGRPCPSLETISTYIGNGVSRLVKRVLTGEMDAEPDPALFAQAIASYQKHYGEHVSLHSRPFDGVVEGLQAFKAMGLHMACITNKAEQFTVPLLKGTGLYDYFELILSGDTLPKRKPDPLPLLHACEVFGVAPAELLLIGDSLNDTQAARAAGCPVFCVPYGYNRGRPVTELDLDAVVPSLAEAALMVTKA</sequence>
<evidence type="ECO:0000255" key="1">
    <source>
        <dbReference type="HAMAP-Rule" id="MF_00495"/>
    </source>
</evidence>
<name>GPH_THIDA</name>
<dbReference type="EC" id="3.1.3.18" evidence="1"/>
<dbReference type="EMBL" id="CP000116">
    <property type="protein sequence ID" value="AAZ98182.1"/>
    <property type="molecule type" value="Genomic_DNA"/>
</dbReference>
<dbReference type="RefSeq" id="WP_011312741.1">
    <property type="nucleotide sequence ID" value="NC_007404.1"/>
</dbReference>
<dbReference type="SMR" id="Q3SGR5"/>
<dbReference type="STRING" id="292415.Tbd_2229"/>
<dbReference type="KEGG" id="tbd:Tbd_2229"/>
<dbReference type="eggNOG" id="COG0546">
    <property type="taxonomic scope" value="Bacteria"/>
</dbReference>
<dbReference type="HOGENOM" id="CLU_045011_19_1_4"/>
<dbReference type="OrthoDB" id="9807630at2"/>
<dbReference type="UniPathway" id="UPA00865">
    <property type="reaction ID" value="UER00834"/>
</dbReference>
<dbReference type="Proteomes" id="UP000008291">
    <property type="component" value="Chromosome"/>
</dbReference>
<dbReference type="GO" id="GO:0005829">
    <property type="term" value="C:cytosol"/>
    <property type="evidence" value="ECO:0007669"/>
    <property type="project" value="TreeGrafter"/>
</dbReference>
<dbReference type="GO" id="GO:0046872">
    <property type="term" value="F:metal ion binding"/>
    <property type="evidence" value="ECO:0007669"/>
    <property type="project" value="UniProtKB-KW"/>
</dbReference>
<dbReference type="GO" id="GO:0008967">
    <property type="term" value="F:phosphoglycolate phosphatase activity"/>
    <property type="evidence" value="ECO:0007669"/>
    <property type="project" value="UniProtKB-UniRule"/>
</dbReference>
<dbReference type="GO" id="GO:0005975">
    <property type="term" value="P:carbohydrate metabolic process"/>
    <property type="evidence" value="ECO:0007669"/>
    <property type="project" value="InterPro"/>
</dbReference>
<dbReference type="GO" id="GO:0006281">
    <property type="term" value="P:DNA repair"/>
    <property type="evidence" value="ECO:0007669"/>
    <property type="project" value="TreeGrafter"/>
</dbReference>
<dbReference type="GO" id="GO:0046295">
    <property type="term" value="P:glycolate biosynthetic process"/>
    <property type="evidence" value="ECO:0007669"/>
    <property type="project" value="UniProtKB-UniRule"/>
</dbReference>
<dbReference type="CDD" id="cd16417">
    <property type="entry name" value="HAD_PGPase"/>
    <property type="match status" value="1"/>
</dbReference>
<dbReference type="FunFam" id="3.40.50.1000:FF:000022">
    <property type="entry name" value="Phosphoglycolate phosphatase"/>
    <property type="match status" value="1"/>
</dbReference>
<dbReference type="Gene3D" id="3.40.50.1000">
    <property type="entry name" value="HAD superfamily/HAD-like"/>
    <property type="match status" value="1"/>
</dbReference>
<dbReference type="Gene3D" id="1.10.150.240">
    <property type="entry name" value="Putative phosphatase, domain 2"/>
    <property type="match status" value="1"/>
</dbReference>
<dbReference type="HAMAP" id="MF_00495">
    <property type="entry name" value="GPH_hydrolase_bact"/>
    <property type="match status" value="1"/>
</dbReference>
<dbReference type="InterPro" id="IPR050155">
    <property type="entry name" value="HAD-like_hydrolase_sf"/>
</dbReference>
<dbReference type="InterPro" id="IPR036412">
    <property type="entry name" value="HAD-like_sf"/>
</dbReference>
<dbReference type="InterPro" id="IPR006439">
    <property type="entry name" value="HAD-SF_hydro_IA"/>
</dbReference>
<dbReference type="InterPro" id="IPR041492">
    <property type="entry name" value="HAD_2"/>
</dbReference>
<dbReference type="InterPro" id="IPR023214">
    <property type="entry name" value="HAD_sf"/>
</dbReference>
<dbReference type="InterPro" id="IPR023198">
    <property type="entry name" value="PGP-like_dom2"/>
</dbReference>
<dbReference type="InterPro" id="IPR037512">
    <property type="entry name" value="PGPase_prok"/>
</dbReference>
<dbReference type="NCBIfam" id="TIGR01549">
    <property type="entry name" value="HAD-SF-IA-v1"/>
    <property type="match status" value="1"/>
</dbReference>
<dbReference type="NCBIfam" id="TIGR01509">
    <property type="entry name" value="HAD-SF-IA-v3"/>
    <property type="match status" value="1"/>
</dbReference>
<dbReference type="NCBIfam" id="TIGR01449">
    <property type="entry name" value="PGP_bact"/>
    <property type="match status" value="1"/>
</dbReference>
<dbReference type="NCBIfam" id="NF009695">
    <property type="entry name" value="PRK13222.1-2"/>
    <property type="match status" value="1"/>
</dbReference>
<dbReference type="PANTHER" id="PTHR43434">
    <property type="entry name" value="PHOSPHOGLYCOLATE PHOSPHATASE"/>
    <property type="match status" value="1"/>
</dbReference>
<dbReference type="PANTHER" id="PTHR43434:SF1">
    <property type="entry name" value="PHOSPHOGLYCOLATE PHOSPHATASE"/>
    <property type="match status" value="1"/>
</dbReference>
<dbReference type="Pfam" id="PF13419">
    <property type="entry name" value="HAD_2"/>
    <property type="match status" value="1"/>
</dbReference>
<dbReference type="PRINTS" id="PR00413">
    <property type="entry name" value="HADHALOGNASE"/>
</dbReference>
<dbReference type="SFLD" id="SFLDG01135">
    <property type="entry name" value="C1.5.6:_HAD__Beta-PGM__Phospha"/>
    <property type="match status" value="1"/>
</dbReference>
<dbReference type="SFLD" id="SFLDG01129">
    <property type="entry name" value="C1.5:_HAD__Beta-PGM__Phosphata"/>
    <property type="match status" value="1"/>
</dbReference>
<dbReference type="SUPFAM" id="SSF56784">
    <property type="entry name" value="HAD-like"/>
    <property type="match status" value="1"/>
</dbReference>
<protein>
    <recommendedName>
        <fullName evidence="1">Phosphoglycolate phosphatase</fullName>
        <shortName evidence="1">PGP</shortName>
        <shortName evidence="1">PGPase</shortName>
        <ecNumber evidence="1">3.1.3.18</ecNumber>
    </recommendedName>
</protein>
<reference key="1">
    <citation type="journal article" date="2006" name="J. Bacteriol.">
        <title>The genome sequence of the obligately chemolithoautotrophic, facultatively anaerobic bacterium Thiobacillus denitrificans.</title>
        <authorList>
            <person name="Beller H.R."/>
            <person name="Chain P.S."/>
            <person name="Letain T.E."/>
            <person name="Chakicherla A."/>
            <person name="Larimer F.W."/>
            <person name="Richardson P.M."/>
            <person name="Coleman M.A."/>
            <person name="Wood A.P."/>
            <person name="Kelly D.P."/>
        </authorList>
    </citation>
    <scope>NUCLEOTIDE SEQUENCE [LARGE SCALE GENOMIC DNA]</scope>
    <source>
        <strain>ATCC 25259 / T1</strain>
    </source>
</reference>
<gene>
    <name type="ordered locus">Tbd_2229</name>
</gene>